<sequence length="485" mass="53178">MALAVEKTSSGREYKVKDMSQADFGRLEIELAEVEMPGLMACRTEFGPSQPFKGAKITGSLHMTIQTAVLIETLTALGAEVRWCSCNIFSTQDHAAAAIARDSAAVFAWKGETLQEYWWCTERALDWGAGGGPDLIVDDGGDATLLIHEGVKAEEEYEKNGTIPDPTSTDNPEFQLVLGLIRDSLKVDPKRYHKMKTRLVGVSEETTTGVKRLYQMQATGTLLFPAINVNDSVTKSKFDNLYGCRHSLPDGLMRATDVMIAGKVGVVCGYGDVGKGCALALKAAGARVIVTEIDPICALQALMEGFQILTLEDVVSEADIFVTTTGNKDIIMVDHMRKMKNNAIVCNIGHFDNEIDMLGLENYPGVKRITIKPQTDRFVFPETNTGIIVLAEGRLMKLGCATGHPSFVMSCSFTNQVIAQLELWNERASGKYEKKVYVLPKHLDEKVAALHLGKLGAKLTKLSKDQADYISVPVEGPYKPAHYRY</sequence>
<evidence type="ECO:0000250" key="1"/>
<evidence type="ECO:0000305" key="2"/>
<feature type="chain" id="PRO_0000116926" description="Adenosylhomocysteinase">
    <location>
        <begin position="1"/>
        <end position="485"/>
    </location>
</feature>
<feature type="binding site" evidence="1">
    <location>
        <position position="64"/>
    </location>
    <ligand>
        <name>substrate</name>
    </ligand>
</feature>
<feature type="binding site" evidence="1">
    <location>
        <position position="139"/>
    </location>
    <ligand>
        <name>substrate</name>
    </ligand>
</feature>
<feature type="binding site" evidence="1">
    <location>
        <position position="205"/>
    </location>
    <ligand>
        <name>substrate</name>
    </ligand>
</feature>
<feature type="binding site" evidence="1">
    <location>
        <begin position="206"/>
        <end position="208"/>
    </location>
    <ligand>
        <name>NAD(+)</name>
        <dbReference type="ChEBI" id="CHEBI:57540"/>
    </ligand>
</feature>
<feature type="binding site" evidence="1">
    <location>
        <position position="235"/>
    </location>
    <ligand>
        <name>substrate</name>
    </ligand>
</feature>
<feature type="binding site" evidence="1">
    <location>
        <position position="239"/>
    </location>
    <ligand>
        <name>substrate</name>
    </ligand>
</feature>
<feature type="binding site" evidence="1">
    <location>
        <position position="240"/>
    </location>
    <ligand>
        <name>NAD(+)</name>
        <dbReference type="ChEBI" id="CHEBI:57540"/>
    </ligand>
</feature>
<feature type="binding site" evidence="1">
    <location>
        <begin position="269"/>
        <end position="274"/>
    </location>
    <ligand>
        <name>NAD(+)</name>
        <dbReference type="ChEBI" id="CHEBI:57540"/>
    </ligand>
</feature>
<feature type="binding site" evidence="1">
    <location>
        <position position="292"/>
    </location>
    <ligand>
        <name>NAD(+)</name>
        <dbReference type="ChEBI" id="CHEBI:57540"/>
    </ligand>
</feature>
<feature type="binding site" evidence="1">
    <location>
        <position position="327"/>
    </location>
    <ligand>
        <name>NAD(+)</name>
        <dbReference type="ChEBI" id="CHEBI:57540"/>
    </ligand>
</feature>
<feature type="binding site" evidence="1">
    <location>
        <begin position="348"/>
        <end position="350"/>
    </location>
    <ligand>
        <name>NAD(+)</name>
        <dbReference type="ChEBI" id="CHEBI:57540"/>
    </ligand>
</feature>
<reference key="1">
    <citation type="submission" date="1996-11" db="EMBL/GenBank/DDBJ databases">
        <authorList>
            <person name="Michalowski C.B."/>
            <person name="Bohnert H.J."/>
        </authorList>
    </citation>
    <scope>NUCLEOTIDE SEQUENCE [MRNA]</scope>
</reference>
<name>SAHH_MESCR</name>
<protein>
    <recommendedName>
        <fullName>Adenosylhomocysteinase</fullName>
        <shortName>AdoHcyase</shortName>
        <ecNumber>3.13.2.1</ecNumber>
    </recommendedName>
    <alternativeName>
        <fullName>S-adenosyl-L-homocysteine hydrolase</fullName>
    </alternativeName>
</protein>
<proteinExistence type="evidence at transcript level"/>
<gene>
    <name type="primary">SAHH</name>
</gene>
<organism>
    <name type="scientific">Mesembryanthemum crystallinum</name>
    <name type="common">Common ice plant</name>
    <name type="synonym">Cryophytum crystallinum</name>
    <dbReference type="NCBI Taxonomy" id="3544"/>
    <lineage>
        <taxon>Eukaryota</taxon>
        <taxon>Viridiplantae</taxon>
        <taxon>Streptophyta</taxon>
        <taxon>Embryophyta</taxon>
        <taxon>Tracheophyta</taxon>
        <taxon>Spermatophyta</taxon>
        <taxon>Magnoliopsida</taxon>
        <taxon>eudicotyledons</taxon>
        <taxon>Gunneridae</taxon>
        <taxon>Pentapetalae</taxon>
        <taxon>Caryophyllales</taxon>
        <taxon>Aizoaceae</taxon>
        <taxon>Mesembryanthemum</taxon>
        <taxon>Mesembryanthemum subgen. Cryophytum</taxon>
    </lineage>
</organism>
<comment type="function">
    <text evidence="1">Adenosylhomocysteine is a competitive inhibitor of S-adenosyl-L-methionine-dependent methyl transferase reactions; therefore adenosylhomocysteinase may play a key role in the control of methylations via regulation of the intracellular concentration of adenosylhomocysteine.</text>
</comment>
<comment type="catalytic activity">
    <reaction>
        <text>S-adenosyl-L-homocysteine + H2O = L-homocysteine + adenosine</text>
        <dbReference type="Rhea" id="RHEA:21708"/>
        <dbReference type="ChEBI" id="CHEBI:15377"/>
        <dbReference type="ChEBI" id="CHEBI:16335"/>
        <dbReference type="ChEBI" id="CHEBI:57856"/>
        <dbReference type="ChEBI" id="CHEBI:58199"/>
        <dbReference type="EC" id="3.13.2.1"/>
    </reaction>
</comment>
<comment type="cofactor">
    <cofactor>
        <name>NAD(+)</name>
        <dbReference type="ChEBI" id="CHEBI:57540"/>
    </cofactor>
    <text>Binds 1 NAD(+) per subunit.</text>
</comment>
<comment type="pathway">
    <text>Amino-acid biosynthesis; L-homocysteine biosynthesis; L-homocysteine from S-adenosyl-L-homocysteine: step 1/1.</text>
</comment>
<comment type="subunit">
    <text evidence="1">Homotetramer.</text>
</comment>
<comment type="similarity">
    <text evidence="2">Belongs to the adenosylhomocysteinase family.</text>
</comment>
<keyword id="KW-0378">Hydrolase</keyword>
<keyword id="KW-0520">NAD</keyword>
<keyword id="KW-0554">One-carbon metabolism</keyword>
<dbReference type="EC" id="3.13.2.1"/>
<dbReference type="EMBL" id="U79766">
    <property type="protein sequence ID" value="AAB38499.1"/>
    <property type="molecule type" value="mRNA"/>
</dbReference>
<dbReference type="SMR" id="P93253"/>
<dbReference type="UniPathway" id="UPA00314">
    <property type="reaction ID" value="UER00076"/>
</dbReference>
<dbReference type="GO" id="GO:0005829">
    <property type="term" value="C:cytosol"/>
    <property type="evidence" value="ECO:0007669"/>
    <property type="project" value="TreeGrafter"/>
</dbReference>
<dbReference type="GO" id="GO:0004013">
    <property type="term" value="F:adenosylhomocysteinase activity"/>
    <property type="evidence" value="ECO:0007669"/>
    <property type="project" value="RHEA"/>
</dbReference>
<dbReference type="GO" id="GO:0006730">
    <property type="term" value="P:one-carbon metabolic process"/>
    <property type="evidence" value="ECO:0007669"/>
    <property type="project" value="UniProtKB-KW"/>
</dbReference>
<dbReference type="GO" id="GO:0033353">
    <property type="term" value="P:S-adenosylmethionine cycle"/>
    <property type="evidence" value="ECO:0007669"/>
    <property type="project" value="TreeGrafter"/>
</dbReference>
<dbReference type="CDD" id="cd00401">
    <property type="entry name" value="SAHH"/>
    <property type="match status" value="1"/>
</dbReference>
<dbReference type="FunFam" id="3.40.50.720:FF:000004">
    <property type="entry name" value="Adenosylhomocysteinase"/>
    <property type="match status" value="1"/>
</dbReference>
<dbReference type="Gene3D" id="3.40.50.1480">
    <property type="entry name" value="Adenosylhomocysteinase-like"/>
    <property type="match status" value="1"/>
</dbReference>
<dbReference type="Gene3D" id="3.40.50.720">
    <property type="entry name" value="NAD(P)-binding Rossmann-like Domain"/>
    <property type="match status" value="1"/>
</dbReference>
<dbReference type="HAMAP" id="MF_00563">
    <property type="entry name" value="AdoHcyase"/>
    <property type="match status" value="1"/>
</dbReference>
<dbReference type="InterPro" id="IPR042172">
    <property type="entry name" value="Adenosylhomocyst_ase-like_sf"/>
</dbReference>
<dbReference type="InterPro" id="IPR000043">
    <property type="entry name" value="Adenosylhomocysteinase-like"/>
</dbReference>
<dbReference type="InterPro" id="IPR015878">
    <property type="entry name" value="Ado_hCys_hydrolase_NAD-bd"/>
</dbReference>
<dbReference type="InterPro" id="IPR036291">
    <property type="entry name" value="NAD(P)-bd_dom_sf"/>
</dbReference>
<dbReference type="InterPro" id="IPR020082">
    <property type="entry name" value="S-Ado-L-homoCys_hydrolase_CS"/>
</dbReference>
<dbReference type="NCBIfam" id="TIGR00936">
    <property type="entry name" value="ahcY"/>
    <property type="match status" value="1"/>
</dbReference>
<dbReference type="NCBIfam" id="NF004005">
    <property type="entry name" value="PRK05476.2-3"/>
    <property type="match status" value="1"/>
</dbReference>
<dbReference type="PANTHER" id="PTHR23420">
    <property type="entry name" value="ADENOSYLHOMOCYSTEINASE"/>
    <property type="match status" value="1"/>
</dbReference>
<dbReference type="PANTHER" id="PTHR23420:SF0">
    <property type="entry name" value="ADENOSYLHOMOCYSTEINASE"/>
    <property type="match status" value="1"/>
</dbReference>
<dbReference type="Pfam" id="PF05221">
    <property type="entry name" value="AdoHcyase"/>
    <property type="match status" value="1"/>
</dbReference>
<dbReference type="Pfam" id="PF00670">
    <property type="entry name" value="AdoHcyase_NAD"/>
    <property type="match status" value="1"/>
</dbReference>
<dbReference type="PIRSF" id="PIRSF001109">
    <property type="entry name" value="Ad_hcy_hydrolase"/>
    <property type="match status" value="1"/>
</dbReference>
<dbReference type="SMART" id="SM00996">
    <property type="entry name" value="AdoHcyase"/>
    <property type="match status" value="1"/>
</dbReference>
<dbReference type="SMART" id="SM00997">
    <property type="entry name" value="AdoHcyase_NAD"/>
    <property type="match status" value="1"/>
</dbReference>
<dbReference type="SUPFAM" id="SSF52283">
    <property type="entry name" value="Formate/glycerate dehydrogenase catalytic domain-like"/>
    <property type="match status" value="2"/>
</dbReference>
<dbReference type="SUPFAM" id="SSF51735">
    <property type="entry name" value="NAD(P)-binding Rossmann-fold domains"/>
    <property type="match status" value="1"/>
</dbReference>
<dbReference type="PROSITE" id="PS00738">
    <property type="entry name" value="ADOHCYASE_1"/>
    <property type="match status" value="1"/>
</dbReference>
<dbReference type="PROSITE" id="PS00739">
    <property type="entry name" value="ADOHCYASE_2"/>
    <property type="match status" value="1"/>
</dbReference>
<accession>P93253</accession>